<feature type="chain" id="PRO_0000165114" description="Uncharacterized 11.9 kDa protein in pin-nrdC intergenic region">
    <location>
        <begin position="1"/>
        <end position="102"/>
    </location>
</feature>
<dbReference type="EMBL" id="Y00122">
    <property type="protein sequence ID" value="CAA68304.1"/>
    <property type="molecule type" value="Genomic_DNA"/>
</dbReference>
<dbReference type="EMBL" id="AF158101">
    <property type="protein sequence ID" value="AAD42480.1"/>
    <property type="molecule type" value="Genomic_DNA"/>
</dbReference>
<dbReference type="PIR" id="A29284">
    <property type="entry name" value="Z1BPT9"/>
</dbReference>
<dbReference type="RefSeq" id="NP_049697.1">
    <property type="nucleotide sequence ID" value="NC_000866.4"/>
</dbReference>
<dbReference type="SMR" id="P07070"/>
<dbReference type="GeneID" id="1258788"/>
<dbReference type="KEGG" id="vg:1258788"/>
<dbReference type="OrthoDB" id="17816at10239"/>
<dbReference type="Proteomes" id="UP000009087">
    <property type="component" value="Segment"/>
</dbReference>
<gene>
    <name type="primary">y04L</name>
    <name type="synonym">49.3</name>
</gene>
<proteinExistence type="predicted"/>
<organismHost>
    <name type="scientific">Escherichia coli</name>
    <dbReference type="NCBI Taxonomy" id="562"/>
</organismHost>
<name>Y04L_BPT4</name>
<reference key="1">
    <citation type="journal article" date="1987" name="Nucleic Acids Res.">
        <title>Nucleotide sequence and primary structures of gene products coded for by the T4 genome between map positions 48.266 kb and 39.166 kb.</title>
        <authorList>
            <person name="Tomaschewski J."/>
            <person name="Rueger W."/>
        </authorList>
    </citation>
    <scope>NUCLEOTIDE SEQUENCE [GENOMIC DNA]</scope>
    <source>
        <strain>C</strain>
    </source>
</reference>
<reference key="2">
    <citation type="journal article" date="2003" name="Microbiol. Mol. Biol. Rev.">
        <title>Bacteriophage T4 genome.</title>
        <authorList>
            <person name="Miller E.S."/>
            <person name="Kutter E."/>
            <person name="Mosig G."/>
            <person name="Arisaka F."/>
            <person name="Kunisawa T."/>
            <person name="Ruger W."/>
        </authorList>
    </citation>
    <scope>NUCLEOTIDE SEQUENCE [LARGE SCALE GENOMIC DNA]</scope>
</reference>
<keyword id="KW-1185">Reference proteome</keyword>
<accession>P07070</accession>
<protein>
    <recommendedName>
        <fullName>Uncharacterized 11.9 kDa protein in pin-nrdC intergenic region</fullName>
    </recommendedName>
</protein>
<organism>
    <name type="scientific">Enterobacteria phage T4</name>
    <name type="common">Bacteriophage T4</name>
    <dbReference type="NCBI Taxonomy" id="10665"/>
    <lineage>
        <taxon>Viruses</taxon>
        <taxon>Duplodnaviria</taxon>
        <taxon>Heunggongvirae</taxon>
        <taxon>Uroviricota</taxon>
        <taxon>Caudoviricetes</taxon>
        <taxon>Straboviridae</taxon>
        <taxon>Tevenvirinae</taxon>
        <taxon>Tequatrovirus</taxon>
    </lineage>
</organism>
<sequence>MIELNEQIIFLGDGTEGDLEYKLYEYMIWLAKAEGIDFVVSNPYGENTVVIGGTAYEVEWRYVGLKSEEYDVTDEGKWIPIGPWFWEHGEPDFEVSSWWCEK</sequence>